<name>PRA18_HUMAN</name>
<sequence>MSFQAPRRLLELAGQSLLRDQALAISVLDELPRELFPPLFVEAFTSRRCEVLKVMVQAWPFPCLPLGSLMKTPDLEILHYVVDGIDCLLAQKVRPRRWKLQVLEMRDVDENFWTIWSGARLLSCSPEAMSKRQTVEDCPRTGEKQPLKVFMDVCLKEKFMDEDLSFFSGWVQHRRGSVHLCCTKVVNYSMSILNFRNILETVYPDSIQVLEIWNMCWLCMIVEFSRYLSQMRNLRKLFISDGCRYLLSSDSQEQLVAEFSSVLLRLENLQMLYVRRVCFFRGHLDQLIRCLRSPLETLALTYGFLEEEDLKCLPRYPSLSQLKQLNLSHGALRFIRLEPLRALLEKVAATLQTLFLVDCGIGYSKLRVILPALSRCSNLTTFCFHGNDTSMDALKDLLRHTGRLSNLSLETYPAPRESLDNRGRVILELLTPLQAELMRILREVREPKRIFFGPVSCPCCGTSPTEQLESNFCLWGRPA</sequence>
<proteinExistence type="inferred from homology"/>
<keyword id="KW-0433">Leucine-rich repeat</keyword>
<keyword id="KW-1185">Reference proteome</keyword>
<keyword id="KW-0677">Repeat</keyword>
<gene>
    <name evidence="4" type="primary">PRAMEF18</name>
</gene>
<reference key="1">
    <citation type="journal article" date="2006" name="Nature">
        <title>The DNA sequence and biological annotation of human chromosome 1.</title>
        <authorList>
            <person name="Gregory S.G."/>
            <person name="Barlow K.F."/>
            <person name="McLay K.E."/>
            <person name="Kaul R."/>
            <person name="Swarbreck D."/>
            <person name="Dunham A."/>
            <person name="Scott C.E."/>
            <person name="Howe K.L."/>
            <person name="Woodfine K."/>
            <person name="Spencer C.C.A."/>
            <person name="Jones M.C."/>
            <person name="Gillson C."/>
            <person name="Searle S."/>
            <person name="Zhou Y."/>
            <person name="Kokocinski F."/>
            <person name="McDonald L."/>
            <person name="Evans R."/>
            <person name="Phillips K."/>
            <person name="Atkinson A."/>
            <person name="Cooper R."/>
            <person name="Jones C."/>
            <person name="Hall R.E."/>
            <person name="Andrews T.D."/>
            <person name="Lloyd C."/>
            <person name="Ainscough R."/>
            <person name="Almeida J.P."/>
            <person name="Ambrose K.D."/>
            <person name="Anderson F."/>
            <person name="Andrew R.W."/>
            <person name="Ashwell R.I.S."/>
            <person name="Aubin K."/>
            <person name="Babbage A.K."/>
            <person name="Bagguley C.L."/>
            <person name="Bailey J."/>
            <person name="Beasley H."/>
            <person name="Bethel G."/>
            <person name="Bird C.P."/>
            <person name="Bray-Allen S."/>
            <person name="Brown J.Y."/>
            <person name="Brown A.J."/>
            <person name="Buckley D."/>
            <person name="Burton J."/>
            <person name="Bye J."/>
            <person name="Carder C."/>
            <person name="Chapman J.C."/>
            <person name="Clark S.Y."/>
            <person name="Clarke G."/>
            <person name="Clee C."/>
            <person name="Cobley V."/>
            <person name="Collier R.E."/>
            <person name="Corby N."/>
            <person name="Coville G.J."/>
            <person name="Davies J."/>
            <person name="Deadman R."/>
            <person name="Dunn M."/>
            <person name="Earthrowl M."/>
            <person name="Ellington A.G."/>
            <person name="Errington H."/>
            <person name="Frankish A."/>
            <person name="Frankland J."/>
            <person name="French L."/>
            <person name="Garner P."/>
            <person name="Garnett J."/>
            <person name="Gay L."/>
            <person name="Ghori M.R.J."/>
            <person name="Gibson R."/>
            <person name="Gilby L.M."/>
            <person name="Gillett W."/>
            <person name="Glithero R.J."/>
            <person name="Grafham D.V."/>
            <person name="Griffiths C."/>
            <person name="Griffiths-Jones S."/>
            <person name="Grocock R."/>
            <person name="Hammond S."/>
            <person name="Harrison E.S.I."/>
            <person name="Hart E."/>
            <person name="Haugen E."/>
            <person name="Heath P.D."/>
            <person name="Holmes S."/>
            <person name="Holt K."/>
            <person name="Howden P.J."/>
            <person name="Hunt A.R."/>
            <person name="Hunt S.E."/>
            <person name="Hunter G."/>
            <person name="Isherwood J."/>
            <person name="James R."/>
            <person name="Johnson C."/>
            <person name="Johnson D."/>
            <person name="Joy A."/>
            <person name="Kay M."/>
            <person name="Kershaw J.K."/>
            <person name="Kibukawa M."/>
            <person name="Kimberley A.M."/>
            <person name="King A."/>
            <person name="Knights A.J."/>
            <person name="Lad H."/>
            <person name="Laird G."/>
            <person name="Lawlor S."/>
            <person name="Leongamornlert D.A."/>
            <person name="Lloyd D.M."/>
            <person name="Loveland J."/>
            <person name="Lovell J."/>
            <person name="Lush M.J."/>
            <person name="Lyne R."/>
            <person name="Martin S."/>
            <person name="Mashreghi-Mohammadi M."/>
            <person name="Matthews L."/>
            <person name="Matthews N.S.W."/>
            <person name="McLaren S."/>
            <person name="Milne S."/>
            <person name="Mistry S."/>
            <person name="Moore M.J.F."/>
            <person name="Nickerson T."/>
            <person name="O'Dell C.N."/>
            <person name="Oliver K."/>
            <person name="Palmeiri A."/>
            <person name="Palmer S.A."/>
            <person name="Parker A."/>
            <person name="Patel D."/>
            <person name="Pearce A.V."/>
            <person name="Peck A.I."/>
            <person name="Pelan S."/>
            <person name="Phelps K."/>
            <person name="Phillimore B.J."/>
            <person name="Plumb R."/>
            <person name="Rajan J."/>
            <person name="Raymond C."/>
            <person name="Rouse G."/>
            <person name="Saenphimmachak C."/>
            <person name="Sehra H.K."/>
            <person name="Sheridan E."/>
            <person name="Shownkeen R."/>
            <person name="Sims S."/>
            <person name="Skuce C.D."/>
            <person name="Smith M."/>
            <person name="Steward C."/>
            <person name="Subramanian S."/>
            <person name="Sycamore N."/>
            <person name="Tracey A."/>
            <person name="Tromans A."/>
            <person name="Van Helmond Z."/>
            <person name="Wall M."/>
            <person name="Wallis J.M."/>
            <person name="White S."/>
            <person name="Whitehead S.L."/>
            <person name="Wilkinson J.E."/>
            <person name="Willey D.L."/>
            <person name="Williams H."/>
            <person name="Wilming L."/>
            <person name="Wray P.W."/>
            <person name="Wu Z."/>
            <person name="Coulson A."/>
            <person name="Vaudin M."/>
            <person name="Sulston J.E."/>
            <person name="Durbin R.M."/>
            <person name="Hubbard T."/>
            <person name="Wooster R."/>
            <person name="Dunham I."/>
            <person name="Carter N.P."/>
            <person name="McVean G."/>
            <person name="Ross M.T."/>
            <person name="Harrow J."/>
            <person name="Olson M.V."/>
            <person name="Beck S."/>
            <person name="Rogers J."/>
            <person name="Bentley D.R."/>
        </authorList>
    </citation>
    <scope>NUCLEOTIDE SEQUENCE [LARGE SCALE GENOMIC DNA]</scope>
</reference>
<comment type="similarity">
    <text evidence="3">Belongs to the PRAME family.</text>
</comment>
<evidence type="ECO:0000250" key="1">
    <source>
        <dbReference type="UniProtKB" id="Q3UWY1"/>
    </source>
</evidence>
<evidence type="ECO:0000255" key="2"/>
<evidence type="ECO:0000305" key="3"/>
<evidence type="ECO:0000312" key="4">
    <source>
        <dbReference type="HGNC" id="HGNC:30693"/>
    </source>
</evidence>
<protein>
    <recommendedName>
        <fullName evidence="4">PRAME family member 18</fullName>
    </recommendedName>
</protein>
<organism>
    <name type="scientific">Homo sapiens</name>
    <name type="common">Human</name>
    <dbReference type="NCBI Taxonomy" id="9606"/>
    <lineage>
        <taxon>Eukaryota</taxon>
        <taxon>Metazoa</taxon>
        <taxon>Chordata</taxon>
        <taxon>Craniata</taxon>
        <taxon>Vertebrata</taxon>
        <taxon>Euteleostomi</taxon>
        <taxon>Mammalia</taxon>
        <taxon>Eutheria</taxon>
        <taxon>Euarchontoglires</taxon>
        <taxon>Primates</taxon>
        <taxon>Haplorrhini</taxon>
        <taxon>Catarrhini</taxon>
        <taxon>Hominidae</taxon>
        <taxon>Homo</taxon>
    </lineage>
</organism>
<feature type="chain" id="PRO_0000290163" description="PRAME family member 18">
    <location>
        <begin position="1"/>
        <end position="479"/>
    </location>
</feature>
<feature type="repeat" description="LRR 1" evidence="2">
    <location>
        <begin position="15"/>
        <end position="38"/>
    </location>
</feature>
<feature type="repeat" description="LRR 1; degenerate" evidence="1">
    <location>
        <begin position="97"/>
        <end position="124"/>
    </location>
</feature>
<feature type="repeat" description="LRR 2; degenerate" evidence="1">
    <location>
        <begin position="179"/>
        <end position="203"/>
    </location>
</feature>
<feature type="repeat" description="LRR 3; degenerate" evidence="1">
    <location>
        <begin position="204"/>
        <end position="230"/>
    </location>
</feature>
<feature type="repeat" description="LRR 4; degenerate" evidence="1">
    <location>
        <begin position="231"/>
        <end position="265"/>
    </location>
</feature>
<feature type="repeat" description="LRR 5" evidence="1">
    <location>
        <begin position="266"/>
        <end position="291"/>
    </location>
</feature>
<feature type="repeat" description="LRR 6" evidence="1">
    <location>
        <begin position="292"/>
        <end position="323"/>
    </location>
</feature>
<feature type="repeat" description="LRR 7" evidence="1">
    <location>
        <begin position="324"/>
        <end position="342"/>
    </location>
</feature>
<feature type="repeat" description="LRR 8" evidence="1">
    <location>
        <begin position="348"/>
        <end position="375"/>
    </location>
</feature>
<feature type="repeat" description="LRR 9" evidence="1">
    <location>
        <begin position="376"/>
        <end position="400"/>
    </location>
</feature>
<dbReference type="EMBL" id="AC244216">
    <property type="status" value="NOT_ANNOTATED_CDS"/>
    <property type="molecule type" value="Genomic_DNA"/>
</dbReference>
<dbReference type="EMBL" id="AL365443">
    <property type="status" value="NOT_ANNOTATED_CDS"/>
    <property type="molecule type" value="Genomic_DNA"/>
</dbReference>
<dbReference type="CCDS" id="CCDS41258.2"/>
<dbReference type="RefSeq" id="NP_001093320.2">
    <property type="nucleotide sequence ID" value="NM_001099850.2"/>
</dbReference>
<dbReference type="SMR" id="Q5VWM3"/>
<dbReference type="FunCoup" id="Q5VWM3">
    <property type="interactions" value="13"/>
</dbReference>
<dbReference type="STRING" id="9606.ENSP00000485473"/>
<dbReference type="iPTMnet" id="Q5VWM3"/>
<dbReference type="PhosphoSitePlus" id="Q5VWM3"/>
<dbReference type="BioMuta" id="PRAMEF18"/>
<dbReference type="DMDM" id="74747420"/>
<dbReference type="MassIVE" id="Q5VWM3"/>
<dbReference type="PaxDb" id="9606-ENSP00000485473"/>
<dbReference type="PeptideAtlas" id="Q5VWM3"/>
<dbReference type="Antibodypedia" id="74329">
    <property type="antibodies" value="55 antibodies from 8 providers"/>
</dbReference>
<dbReference type="DNASU" id="391003"/>
<dbReference type="Ensembl" id="ENST00000624297.3">
    <property type="protein sequence ID" value="ENSP00000485473.2"/>
    <property type="gene ID" value="ENSG00000279804.3"/>
</dbReference>
<dbReference type="Ensembl" id="ENST00000632307.2">
    <property type="protein sequence ID" value="ENSP00000488059.2"/>
    <property type="gene ID" value="ENSG00000282212.2"/>
</dbReference>
<dbReference type="GeneID" id="391003"/>
<dbReference type="KEGG" id="hsa:391003"/>
<dbReference type="MANE-Select" id="ENST00000624297.3">
    <property type="protein sequence ID" value="ENSP00000485473.2"/>
    <property type="RefSeq nucleotide sequence ID" value="NM_001099850.2"/>
    <property type="RefSeq protein sequence ID" value="NP_001093320.2"/>
</dbReference>
<dbReference type="AGR" id="HGNC:30693"/>
<dbReference type="CTD" id="391003"/>
<dbReference type="GeneCards" id="PRAMEF18"/>
<dbReference type="HGNC" id="HGNC:30693">
    <property type="gene designation" value="PRAMEF18"/>
</dbReference>
<dbReference type="HPA" id="ENSG00000279804">
    <property type="expression patterns" value="Not detected"/>
</dbReference>
<dbReference type="neXtProt" id="NX_Q5VWM3"/>
<dbReference type="OpenTargets" id="ENSG00000279804"/>
<dbReference type="PharmGKB" id="PA145148195"/>
<dbReference type="VEuPathDB" id="HostDB:ENSG00000279804"/>
<dbReference type="eggNOG" id="ENOG502QWSJ">
    <property type="taxonomic scope" value="Eukaryota"/>
</dbReference>
<dbReference type="GeneTree" id="ENSGT01030000234531"/>
<dbReference type="InParanoid" id="Q5VWM3"/>
<dbReference type="OMA" id="YSTCILN"/>
<dbReference type="OrthoDB" id="9628575at2759"/>
<dbReference type="PAN-GO" id="Q5VWM3">
    <property type="GO annotations" value="1 GO annotation based on evolutionary models"/>
</dbReference>
<dbReference type="TreeFam" id="TF332708"/>
<dbReference type="PathwayCommons" id="Q5VWM3"/>
<dbReference type="BioGRID-ORCS" id="391003">
    <property type="hits" value="17 hits in 1023 CRISPR screens"/>
</dbReference>
<dbReference type="GenomeRNAi" id="391003"/>
<dbReference type="Pharos" id="Q5VWM3">
    <property type="development level" value="Tdark"/>
</dbReference>
<dbReference type="PRO" id="PR:Q5VWM3"/>
<dbReference type="Proteomes" id="UP000005640">
    <property type="component" value="Chromosome 1"/>
</dbReference>
<dbReference type="RNAct" id="Q5VWM3">
    <property type="molecule type" value="protein"/>
</dbReference>
<dbReference type="Bgee" id="ENSG00000279804">
    <property type="expression patterns" value="Expressed in left adrenal gland cortex and 4 other cell types or tissues"/>
</dbReference>
<dbReference type="GO" id="GO:0031462">
    <property type="term" value="C:Cul2-RING ubiquitin ligase complex"/>
    <property type="evidence" value="ECO:0000318"/>
    <property type="project" value="GO_Central"/>
</dbReference>
<dbReference type="GO" id="GO:0005737">
    <property type="term" value="C:cytoplasm"/>
    <property type="evidence" value="ECO:0000318"/>
    <property type="project" value="GO_Central"/>
</dbReference>
<dbReference type="GO" id="GO:1990756">
    <property type="term" value="F:ubiquitin-like ligase-substrate adaptor activity"/>
    <property type="evidence" value="ECO:0000318"/>
    <property type="project" value="GO_Central"/>
</dbReference>
<dbReference type="GO" id="GO:0043066">
    <property type="term" value="P:negative regulation of apoptotic process"/>
    <property type="evidence" value="ECO:0007669"/>
    <property type="project" value="InterPro"/>
</dbReference>
<dbReference type="GO" id="GO:0045596">
    <property type="term" value="P:negative regulation of cell differentiation"/>
    <property type="evidence" value="ECO:0007669"/>
    <property type="project" value="InterPro"/>
</dbReference>
<dbReference type="GO" id="GO:0045892">
    <property type="term" value="P:negative regulation of DNA-templated transcription"/>
    <property type="evidence" value="ECO:0007669"/>
    <property type="project" value="InterPro"/>
</dbReference>
<dbReference type="GO" id="GO:0008284">
    <property type="term" value="P:positive regulation of cell population proliferation"/>
    <property type="evidence" value="ECO:0007669"/>
    <property type="project" value="InterPro"/>
</dbReference>
<dbReference type="GO" id="GO:0043161">
    <property type="term" value="P:proteasome-mediated ubiquitin-dependent protein catabolic process"/>
    <property type="evidence" value="ECO:0000318"/>
    <property type="project" value="GO_Central"/>
</dbReference>
<dbReference type="FunFam" id="3.80.10.10:FF:000079">
    <property type="entry name" value="PRAME family member 18"/>
    <property type="match status" value="1"/>
</dbReference>
<dbReference type="Gene3D" id="3.80.10.10">
    <property type="entry name" value="Ribonuclease Inhibitor"/>
    <property type="match status" value="1"/>
</dbReference>
<dbReference type="InterPro" id="IPR032675">
    <property type="entry name" value="LRR_dom_sf"/>
</dbReference>
<dbReference type="InterPro" id="IPR026271">
    <property type="entry name" value="PRAME"/>
</dbReference>
<dbReference type="InterPro" id="IPR050694">
    <property type="entry name" value="PRAME_domain"/>
</dbReference>
<dbReference type="PANTHER" id="PTHR14224:SF79">
    <property type="entry name" value="PRAME FAMILY MEMBER 18-RELATED"/>
    <property type="match status" value="1"/>
</dbReference>
<dbReference type="PANTHER" id="PTHR14224">
    <property type="entry name" value="SIMILAR TO PREFERENTIALLY EXPRESSED ANTIGEN IN MELANOMA-LIKE 3"/>
    <property type="match status" value="1"/>
</dbReference>
<dbReference type="PIRSF" id="PIRSF038286">
    <property type="entry name" value="PRAME"/>
    <property type="match status" value="1"/>
</dbReference>
<dbReference type="SUPFAM" id="SSF52047">
    <property type="entry name" value="RNI-like"/>
    <property type="match status" value="1"/>
</dbReference>
<accession>Q5VWM3</accession>